<keyword id="KW-0963">Cytoplasm</keyword>
<keyword id="KW-0479">Metal-binding</keyword>
<keyword id="KW-0862">Zinc</keyword>
<dbReference type="EMBL" id="BX571857">
    <property type="protein sequence ID" value="CAG43774.1"/>
    <property type="molecule type" value="Genomic_DNA"/>
</dbReference>
<dbReference type="RefSeq" id="WP_001058111.1">
    <property type="nucleotide sequence ID" value="NC_002953.3"/>
</dbReference>
<dbReference type="KEGG" id="sas:SAS1967"/>
<dbReference type="HOGENOM" id="CLU_123820_0_0_9"/>
<dbReference type="GO" id="GO:0005737">
    <property type="term" value="C:cytoplasm"/>
    <property type="evidence" value="ECO:0007669"/>
    <property type="project" value="UniProtKB-SubCell"/>
</dbReference>
<dbReference type="GO" id="GO:0008270">
    <property type="term" value="F:zinc ion binding"/>
    <property type="evidence" value="ECO:0007669"/>
    <property type="project" value="UniProtKB-UniRule"/>
</dbReference>
<dbReference type="GO" id="GO:0006950">
    <property type="term" value="P:response to stress"/>
    <property type="evidence" value="ECO:0007669"/>
    <property type="project" value="UniProtKB-ARBA"/>
</dbReference>
<dbReference type="HAMAP" id="MF_00745">
    <property type="entry name" value="SprT_like"/>
    <property type="match status" value="1"/>
</dbReference>
<dbReference type="InterPro" id="IPR006640">
    <property type="entry name" value="SprT-like_domain"/>
</dbReference>
<dbReference type="InterPro" id="IPR035240">
    <property type="entry name" value="SprT_Zn_ribbon"/>
</dbReference>
<dbReference type="InterPro" id="IPR023524">
    <property type="entry name" value="Uncharacterised_SprT-like"/>
</dbReference>
<dbReference type="NCBIfam" id="NF003339">
    <property type="entry name" value="PRK04351.1"/>
    <property type="match status" value="1"/>
</dbReference>
<dbReference type="Pfam" id="PF10263">
    <property type="entry name" value="SprT-like"/>
    <property type="match status" value="1"/>
</dbReference>
<dbReference type="Pfam" id="PF17283">
    <property type="entry name" value="Zn_ribbon_SprT"/>
    <property type="match status" value="1"/>
</dbReference>
<dbReference type="SMART" id="SM00731">
    <property type="entry name" value="SprT"/>
    <property type="match status" value="1"/>
</dbReference>
<organism>
    <name type="scientific">Staphylococcus aureus (strain MSSA476)</name>
    <dbReference type="NCBI Taxonomy" id="282459"/>
    <lineage>
        <taxon>Bacteria</taxon>
        <taxon>Bacillati</taxon>
        <taxon>Bacillota</taxon>
        <taxon>Bacilli</taxon>
        <taxon>Bacillales</taxon>
        <taxon>Staphylococcaceae</taxon>
        <taxon>Staphylococcus</taxon>
    </lineage>
</organism>
<name>SPRTL_STAAS</name>
<evidence type="ECO:0000255" key="1">
    <source>
        <dbReference type="HAMAP-Rule" id="MF_00745"/>
    </source>
</evidence>
<reference key="1">
    <citation type="journal article" date="2004" name="Proc. Natl. Acad. Sci. U.S.A.">
        <title>Complete genomes of two clinical Staphylococcus aureus strains: evidence for the rapid evolution of virulence and drug resistance.</title>
        <authorList>
            <person name="Holden M.T.G."/>
            <person name="Feil E.J."/>
            <person name="Lindsay J.A."/>
            <person name="Peacock S.J."/>
            <person name="Day N.P.J."/>
            <person name="Enright M.C."/>
            <person name="Foster T.J."/>
            <person name="Moore C.E."/>
            <person name="Hurst L."/>
            <person name="Atkin R."/>
            <person name="Barron A."/>
            <person name="Bason N."/>
            <person name="Bentley S.D."/>
            <person name="Chillingworth C."/>
            <person name="Chillingworth T."/>
            <person name="Churcher C."/>
            <person name="Clark L."/>
            <person name="Corton C."/>
            <person name="Cronin A."/>
            <person name="Doggett J."/>
            <person name="Dowd L."/>
            <person name="Feltwell T."/>
            <person name="Hance Z."/>
            <person name="Harris B."/>
            <person name="Hauser H."/>
            <person name="Holroyd S."/>
            <person name="Jagels K."/>
            <person name="James K.D."/>
            <person name="Lennard N."/>
            <person name="Line A."/>
            <person name="Mayes R."/>
            <person name="Moule S."/>
            <person name="Mungall K."/>
            <person name="Ormond D."/>
            <person name="Quail M.A."/>
            <person name="Rabbinowitsch E."/>
            <person name="Rutherford K.M."/>
            <person name="Sanders M."/>
            <person name="Sharp S."/>
            <person name="Simmonds M."/>
            <person name="Stevens K."/>
            <person name="Whitehead S."/>
            <person name="Barrell B.G."/>
            <person name="Spratt B.G."/>
            <person name="Parkhill J."/>
        </authorList>
    </citation>
    <scope>NUCLEOTIDE SEQUENCE [LARGE SCALE GENOMIC DNA]</scope>
    <source>
        <strain>MSSA476</strain>
    </source>
</reference>
<feature type="chain" id="PRO_0000213300" description="Protein SprT-like">
    <location>
        <begin position="1"/>
        <end position="151"/>
    </location>
</feature>
<feature type="domain" description="SprT-like" evidence="1">
    <location>
        <begin position="6"/>
        <end position="147"/>
    </location>
</feature>
<feature type="active site" evidence="1">
    <location>
        <position position="68"/>
    </location>
</feature>
<feature type="binding site" evidence="1">
    <location>
        <position position="67"/>
    </location>
    <ligand>
        <name>Zn(2+)</name>
        <dbReference type="ChEBI" id="CHEBI:29105"/>
    </ligand>
</feature>
<feature type="binding site" evidence="1">
    <location>
        <position position="71"/>
    </location>
    <ligand>
        <name>Zn(2+)</name>
        <dbReference type="ChEBI" id="CHEBI:29105"/>
    </ligand>
</feature>
<comment type="cofactor">
    <cofactor evidence="1">
        <name>Zn(2+)</name>
        <dbReference type="ChEBI" id="CHEBI:29105"/>
    </cofactor>
    <text evidence="1">Binds 1 zinc ion.</text>
</comment>
<comment type="subcellular location">
    <subcellularLocation>
        <location evidence="1">Cytoplasm</location>
    </subcellularLocation>
</comment>
<comment type="similarity">
    <text evidence="1">Belongs to the SprT family.</text>
</comment>
<gene>
    <name type="ordered locus">SAS1967</name>
</gene>
<protein>
    <recommendedName>
        <fullName evidence="1">Protein SprT-like</fullName>
    </recommendedName>
</protein>
<accession>Q6G7P7</accession>
<sequence>MNNDKLQRMVENLSEEKFGRTFRHCAYFNKRLRTTGGRYLLKSHDIEINPKQYEHYGEDAVVKIILHELCHYHLHIAGKGYQHKDQDFKRLSQQVGAPRFCNSIESYQQRANYEYYCTKCHAKYIRIRKVDTNRMRCGHCNGKLRMKRQLK</sequence>
<proteinExistence type="inferred from homology"/>